<dbReference type="EMBL" id="AK005190">
    <property type="protein sequence ID" value="BAB23872.1"/>
    <property type="molecule type" value="mRNA"/>
</dbReference>
<dbReference type="EMBL" id="AK038651">
    <property type="protein sequence ID" value="BAC30081.1"/>
    <property type="status" value="ALT_INIT"/>
    <property type="molecule type" value="mRNA"/>
</dbReference>
<dbReference type="EMBL" id="AK044055">
    <property type="protein sequence ID" value="BAC31756.1"/>
    <property type="molecule type" value="mRNA"/>
</dbReference>
<dbReference type="EMBL" id="AK145919">
    <property type="protein sequence ID" value="BAE26750.1"/>
    <property type="status" value="ALT_INIT"/>
    <property type="molecule type" value="mRNA"/>
</dbReference>
<dbReference type="EMBL" id="AK165906">
    <property type="protein sequence ID" value="BAE38452.1"/>
    <property type="status" value="ALT_INIT"/>
    <property type="molecule type" value="mRNA"/>
</dbReference>
<dbReference type="EMBL" id="AL645902">
    <property type="status" value="NOT_ANNOTATED_CDS"/>
    <property type="molecule type" value="Genomic_DNA"/>
</dbReference>
<dbReference type="EMBL" id="BC014687">
    <property type="protein sequence ID" value="AAH14687.1"/>
    <property type="status" value="ALT_INIT"/>
    <property type="molecule type" value="mRNA"/>
</dbReference>
<dbReference type="EMBL" id="BC060629">
    <property type="protein sequence ID" value="AAH60629.3"/>
    <property type="status" value="ALT_INIT"/>
    <property type="molecule type" value="mRNA"/>
</dbReference>
<dbReference type="EMBL" id="BC147495">
    <property type="protein sequence ID" value="AAI47496.1"/>
    <property type="molecule type" value="mRNA"/>
</dbReference>
<dbReference type="EMBL" id="BC147497">
    <property type="protein sequence ID" value="AAI47498.1"/>
    <property type="molecule type" value="mRNA"/>
</dbReference>
<dbReference type="CCDS" id="CCDS36189.2">
    <molecule id="Q5SUQ9-1"/>
</dbReference>
<dbReference type="CCDS" id="CCDS48824.1">
    <molecule id="Q5SUQ9-2"/>
</dbReference>
<dbReference type="RefSeq" id="NP_001013274.2">
    <molecule id="Q5SUQ9-1"/>
    <property type="nucleotide sequence ID" value="NM_001013256.2"/>
</dbReference>
<dbReference type="RefSeq" id="NP_001137262.1">
    <molecule id="Q5SUQ9-2"/>
    <property type="nucleotide sequence ID" value="NM_001143790.1"/>
</dbReference>
<dbReference type="RefSeq" id="NP_001268394.1">
    <molecule id="Q5SUQ9-3"/>
    <property type="nucleotide sequence ID" value="NM_001281465.1"/>
</dbReference>
<dbReference type="SMR" id="Q5SUQ9"/>
<dbReference type="BioGRID" id="213143">
    <property type="interactions" value="3"/>
</dbReference>
<dbReference type="ComplexPortal" id="CPX-2130">
    <property type="entry name" value="CST complex"/>
</dbReference>
<dbReference type="FunCoup" id="Q5SUQ9">
    <property type="interactions" value="2746"/>
</dbReference>
<dbReference type="IntAct" id="Q5SUQ9">
    <property type="interactions" value="3"/>
</dbReference>
<dbReference type="STRING" id="10090.ENSMUSP00000112063"/>
<dbReference type="GlyGen" id="Q5SUQ9">
    <property type="glycosylation" value="1 site"/>
</dbReference>
<dbReference type="iPTMnet" id="Q5SUQ9"/>
<dbReference type="PhosphoSitePlus" id="Q5SUQ9"/>
<dbReference type="SwissPalm" id="Q5SUQ9"/>
<dbReference type="jPOST" id="Q5SUQ9"/>
<dbReference type="PaxDb" id="10090-ENSMUSP00000112063"/>
<dbReference type="PeptideAtlas" id="Q5SUQ9"/>
<dbReference type="ProteomicsDB" id="285388">
    <molecule id="Q5SUQ9-1"/>
</dbReference>
<dbReference type="ProteomicsDB" id="285389">
    <molecule id="Q5SUQ9-2"/>
</dbReference>
<dbReference type="ProteomicsDB" id="285390">
    <molecule id="Q5SUQ9-3"/>
</dbReference>
<dbReference type="Pumba" id="Q5SUQ9"/>
<dbReference type="Antibodypedia" id="47974">
    <property type="antibodies" value="55 antibodies from 11 providers"/>
</dbReference>
<dbReference type="DNASU" id="68964"/>
<dbReference type="Ensembl" id="ENSMUST00000021278.14">
    <molecule id="Q5SUQ9-2"/>
    <property type="protein sequence ID" value="ENSMUSP00000021278.8"/>
    <property type="gene ID" value="ENSMUSG00000020898.19"/>
</dbReference>
<dbReference type="Ensembl" id="ENSMUST00000116359.3">
    <molecule id="Q5SUQ9-1"/>
    <property type="protein sequence ID" value="ENSMUSP00000112063.3"/>
    <property type="gene ID" value="ENSMUSG00000020898.19"/>
</dbReference>
<dbReference type="GeneID" id="68964"/>
<dbReference type="KEGG" id="mmu:68964"/>
<dbReference type="UCSC" id="uc007jox.2">
    <molecule id="Q5SUQ9-1"/>
    <property type="organism name" value="mouse"/>
</dbReference>
<dbReference type="UCSC" id="uc007joz.2">
    <molecule id="Q5SUQ9-2"/>
    <property type="organism name" value="mouse"/>
</dbReference>
<dbReference type="AGR" id="MGI:1916214"/>
<dbReference type="CTD" id="80169"/>
<dbReference type="MGI" id="MGI:1916214">
    <property type="gene designation" value="Ctc1"/>
</dbReference>
<dbReference type="VEuPathDB" id="HostDB:ENSMUSG00000020898"/>
<dbReference type="eggNOG" id="ENOG502RBD3">
    <property type="taxonomic scope" value="Eukaryota"/>
</dbReference>
<dbReference type="GeneTree" id="ENSGT00390000011553"/>
<dbReference type="HOGENOM" id="CLU_008170_0_0_1"/>
<dbReference type="InParanoid" id="Q5SUQ9"/>
<dbReference type="OMA" id="HTDYTPT"/>
<dbReference type="OrthoDB" id="2314520at2759"/>
<dbReference type="PhylomeDB" id="Q5SUQ9"/>
<dbReference type="TreeFam" id="TF335866"/>
<dbReference type="Reactome" id="R-MMU-174411">
    <property type="pathway name" value="Polymerase switching on the C-strand of the telomere"/>
</dbReference>
<dbReference type="Reactome" id="R-MMU-174430">
    <property type="pathway name" value="Telomere C-strand synthesis initiation"/>
</dbReference>
<dbReference type="BioGRID-ORCS" id="68964">
    <property type="hits" value="13 hits in 77 CRISPR screens"/>
</dbReference>
<dbReference type="ChiTaRS" id="Ctc1">
    <property type="organism name" value="mouse"/>
</dbReference>
<dbReference type="PRO" id="PR:Q5SUQ9"/>
<dbReference type="Proteomes" id="UP000000589">
    <property type="component" value="Chromosome 11"/>
</dbReference>
<dbReference type="RNAct" id="Q5SUQ9">
    <property type="molecule type" value="protein"/>
</dbReference>
<dbReference type="Bgee" id="ENSMUSG00000020898">
    <property type="expression patterns" value="Expressed in ventricular zone and 265 other cell types or tissues"/>
</dbReference>
<dbReference type="ExpressionAtlas" id="Q5SUQ9">
    <property type="expression patterns" value="baseline and differential"/>
</dbReference>
<dbReference type="GO" id="GO:0000781">
    <property type="term" value="C:chromosome, telomeric region"/>
    <property type="evidence" value="ECO:0000314"/>
    <property type="project" value="UniProtKB"/>
</dbReference>
<dbReference type="GO" id="GO:1990879">
    <property type="term" value="C:CST complex"/>
    <property type="evidence" value="ECO:0000314"/>
    <property type="project" value="UniProtKB"/>
</dbReference>
<dbReference type="GO" id="GO:0005829">
    <property type="term" value="C:cytosol"/>
    <property type="evidence" value="ECO:0007669"/>
    <property type="project" value="Ensembl"/>
</dbReference>
<dbReference type="GO" id="GO:0005654">
    <property type="term" value="C:nucleoplasm"/>
    <property type="evidence" value="ECO:0007669"/>
    <property type="project" value="Ensembl"/>
</dbReference>
<dbReference type="GO" id="GO:0005634">
    <property type="term" value="C:nucleus"/>
    <property type="evidence" value="ECO:0000314"/>
    <property type="project" value="UniProtKB"/>
</dbReference>
<dbReference type="GO" id="GO:0098505">
    <property type="term" value="F:G-rich strand telomeric DNA binding"/>
    <property type="evidence" value="ECO:0007669"/>
    <property type="project" value="Ensembl"/>
</dbReference>
<dbReference type="GO" id="GO:0003697">
    <property type="term" value="F:single-stranded DNA binding"/>
    <property type="evidence" value="ECO:0000314"/>
    <property type="project" value="UniProtKB"/>
</dbReference>
<dbReference type="GO" id="GO:0048539">
    <property type="term" value="P:bone marrow development"/>
    <property type="evidence" value="ECO:0000315"/>
    <property type="project" value="MGI"/>
</dbReference>
<dbReference type="GO" id="GO:0051276">
    <property type="term" value="P:chromosome organization"/>
    <property type="evidence" value="ECO:0000315"/>
    <property type="project" value="MGI"/>
</dbReference>
<dbReference type="GO" id="GO:0006974">
    <property type="term" value="P:DNA damage response"/>
    <property type="evidence" value="ECO:0000315"/>
    <property type="project" value="MGI"/>
</dbReference>
<dbReference type="GO" id="GO:0071425">
    <property type="term" value="P:hematopoietic stem cell proliferation"/>
    <property type="evidence" value="ECO:0000315"/>
    <property type="project" value="MGI"/>
</dbReference>
<dbReference type="GO" id="GO:0035264">
    <property type="term" value="P:multicellular organism growth"/>
    <property type="evidence" value="ECO:0000315"/>
    <property type="project" value="MGI"/>
</dbReference>
<dbReference type="GO" id="GO:0032211">
    <property type="term" value="P:negative regulation of telomere maintenance via telomerase"/>
    <property type="evidence" value="ECO:0007669"/>
    <property type="project" value="Ensembl"/>
</dbReference>
<dbReference type="GO" id="GO:0045740">
    <property type="term" value="P:positive regulation of DNA replication"/>
    <property type="evidence" value="ECO:0000314"/>
    <property type="project" value="UniProtKB"/>
</dbReference>
<dbReference type="GO" id="GO:0048146">
    <property type="term" value="P:positive regulation of fibroblast proliferation"/>
    <property type="evidence" value="ECO:0000315"/>
    <property type="project" value="MGI"/>
</dbReference>
<dbReference type="GO" id="GO:0010389">
    <property type="term" value="P:regulation of G2/M transition of mitotic cell cycle"/>
    <property type="evidence" value="ECO:0000315"/>
    <property type="project" value="MGI"/>
</dbReference>
<dbReference type="GO" id="GO:0090399">
    <property type="term" value="P:replicative senescence"/>
    <property type="evidence" value="ECO:0000315"/>
    <property type="project" value="MGI"/>
</dbReference>
<dbReference type="GO" id="GO:0048536">
    <property type="term" value="P:spleen development"/>
    <property type="evidence" value="ECO:0000315"/>
    <property type="project" value="MGI"/>
</dbReference>
<dbReference type="GO" id="GO:0000723">
    <property type="term" value="P:telomere maintenance"/>
    <property type="evidence" value="ECO:0000250"/>
    <property type="project" value="UniProtKB"/>
</dbReference>
<dbReference type="GO" id="GO:0010833">
    <property type="term" value="P:telomere maintenance via telomere lengthening"/>
    <property type="evidence" value="ECO:0000315"/>
    <property type="project" value="MGI"/>
</dbReference>
<dbReference type="GO" id="GO:0048538">
    <property type="term" value="P:thymus development"/>
    <property type="evidence" value="ECO:0000315"/>
    <property type="project" value="MGI"/>
</dbReference>
<dbReference type="InterPro" id="IPR029156">
    <property type="entry name" value="CTC1"/>
</dbReference>
<dbReference type="InterPro" id="IPR042617">
    <property type="entry name" value="CTC1-like"/>
</dbReference>
<dbReference type="PANTHER" id="PTHR14865">
    <property type="entry name" value="CST COMPLEX SUBUNIT CTC1"/>
    <property type="match status" value="1"/>
</dbReference>
<dbReference type="PANTHER" id="PTHR14865:SF2">
    <property type="entry name" value="CST COMPLEX SUBUNIT CTC1"/>
    <property type="match status" value="1"/>
</dbReference>
<dbReference type="Pfam" id="PF15489">
    <property type="entry name" value="CTC1"/>
    <property type="match status" value="1"/>
</dbReference>
<comment type="function">
    <text evidence="1 3 4">Component of the CST complex proposed to act as a specialized replication factor promoting DNA replication under conditions of replication stress or natural replication barriers such as the telomere duplex. The CST complex binds single-stranded DNA with high affinity in a sequence-independent manner, while isolated subunits bind DNA with low affinity by themselves. Initially the CST complex has been proposed to protect telomeres from DNA degradation (PubMed:19854130). However, the CST complex has been shown to be involved in several aspects of telomere replication. The CST complex inhibits telomerase and is involved in telomere length homeostasis; it is proposed to bind to newly telomerase-synthesized 3' overhangs and to terminate telomerase action implicating the association with the ACD:POT1 complex thus interfering with its telomerase stimulation activity. The CST complex is also proposed to be involved in fill-in synthesis of the telomeric C-strand probably implicating recruitment and activation of DNA polymerase alpha. The CST complex facilitates recovery from many forms of exogenous DNA damage; seems to be involved in the re-initiation of DNA replication at repaired forks and/or dormant origins. Involved in telomere maintenance. Involved in genome stability (By similarity). May be in involved in telomeric C-strand fill-in during late S/G2 phase (PubMed:22748632).</text>
</comment>
<comment type="subunit">
    <text evidence="1 2 3">Component of the CST complex, composed of TEN1/C17orf106, CTC1/C17orf68 and STN1; in the complex interacts directly with STN1. Interacts with ACD and POT1 (By similarity).</text>
</comment>
<comment type="subcellular location">
    <subcellularLocation>
        <location evidence="2 3">Nucleus</location>
    </subcellularLocation>
    <subcellularLocation>
        <location evidence="3">Chromosome</location>
        <location evidence="3">Telomere</location>
    </subcellularLocation>
    <text evidence="7">A transmembrane region is predicted by sequence analysis tools (ESKW, MEMSAT and Phobius); however, given the telomeric localization of the protein, the relevance of the transmembrane region is unsure in vivo.</text>
</comment>
<comment type="alternative products">
    <event type="alternative splicing"/>
    <isoform>
        <id>Q5SUQ9-1</id>
        <name>1</name>
        <sequence type="displayed"/>
    </isoform>
    <isoform>
        <id>Q5SUQ9-2</id>
        <name>2</name>
        <sequence type="described" ref="VSP_025355"/>
    </isoform>
    <isoform>
        <id>Q5SUQ9-3</id>
        <name>3</name>
        <sequence type="described" ref="VSP_025354"/>
    </isoform>
</comment>
<comment type="similarity">
    <text evidence="7">Belongs to the CTC1 family.</text>
</comment>
<comment type="sequence caution" evidence="7">
    <conflict type="erroneous initiation">
        <sequence resource="EMBL-CDS" id="AAH14687"/>
    </conflict>
    <text>Truncated N-terminus.</text>
</comment>
<comment type="sequence caution" evidence="7">
    <conflict type="erroneous initiation">
        <sequence resource="EMBL-CDS" id="AAH60629"/>
    </conflict>
    <text>Truncated N-terminus.</text>
</comment>
<comment type="sequence caution" evidence="7">
    <conflict type="erroneous initiation">
        <sequence resource="EMBL-CDS" id="BAC30081"/>
    </conflict>
    <text>Truncated N-terminus.</text>
</comment>
<comment type="sequence caution" evidence="7">
    <conflict type="erroneous initiation">
        <sequence resource="EMBL-CDS" id="BAE26750"/>
    </conflict>
    <text>Truncated N-terminus.</text>
</comment>
<comment type="sequence caution" evidence="7">
    <conflict type="erroneous initiation">
        <sequence resource="EMBL-CDS" id="BAE38452"/>
    </conflict>
    <text>Truncated N-terminus.</text>
</comment>
<reference key="1">
    <citation type="journal article" date="2005" name="Science">
        <title>The transcriptional landscape of the mammalian genome.</title>
        <authorList>
            <person name="Carninci P."/>
            <person name="Kasukawa T."/>
            <person name="Katayama S."/>
            <person name="Gough J."/>
            <person name="Frith M.C."/>
            <person name="Maeda N."/>
            <person name="Oyama R."/>
            <person name="Ravasi T."/>
            <person name="Lenhard B."/>
            <person name="Wells C."/>
            <person name="Kodzius R."/>
            <person name="Shimokawa K."/>
            <person name="Bajic V.B."/>
            <person name="Brenner S.E."/>
            <person name="Batalov S."/>
            <person name="Forrest A.R."/>
            <person name="Zavolan M."/>
            <person name="Davis M.J."/>
            <person name="Wilming L.G."/>
            <person name="Aidinis V."/>
            <person name="Allen J.E."/>
            <person name="Ambesi-Impiombato A."/>
            <person name="Apweiler R."/>
            <person name="Aturaliya R.N."/>
            <person name="Bailey T.L."/>
            <person name="Bansal M."/>
            <person name="Baxter L."/>
            <person name="Beisel K.W."/>
            <person name="Bersano T."/>
            <person name="Bono H."/>
            <person name="Chalk A.M."/>
            <person name="Chiu K.P."/>
            <person name="Choudhary V."/>
            <person name="Christoffels A."/>
            <person name="Clutterbuck D.R."/>
            <person name="Crowe M.L."/>
            <person name="Dalla E."/>
            <person name="Dalrymple B.P."/>
            <person name="de Bono B."/>
            <person name="Della Gatta G."/>
            <person name="di Bernardo D."/>
            <person name="Down T."/>
            <person name="Engstrom P."/>
            <person name="Fagiolini M."/>
            <person name="Faulkner G."/>
            <person name="Fletcher C.F."/>
            <person name="Fukushima T."/>
            <person name="Furuno M."/>
            <person name="Futaki S."/>
            <person name="Gariboldi M."/>
            <person name="Georgii-Hemming P."/>
            <person name="Gingeras T.R."/>
            <person name="Gojobori T."/>
            <person name="Green R.E."/>
            <person name="Gustincich S."/>
            <person name="Harbers M."/>
            <person name="Hayashi Y."/>
            <person name="Hensch T.K."/>
            <person name="Hirokawa N."/>
            <person name="Hill D."/>
            <person name="Huminiecki L."/>
            <person name="Iacono M."/>
            <person name="Ikeo K."/>
            <person name="Iwama A."/>
            <person name="Ishikawa T."/>
            <person name="Jakt M."/>
            <person name="Kanapin A."/>
            <person name="Katoh M."/>
            <person name="Kawasawa Y."/>
            <person name="Kelso J."/>
            <person name="Kitamura H."/>
            <person name="Kitano H."/>
            <person name="Kollias G."/>
            <person name="Krishnan S.P."/>
            <person name="Kruger A."/>
            <person name="Kummerfeld S.K."/>
            <person name="Kurochkin I.V."/>
            <person name="Lareau L.F."/>
            <person name="Lazarevic D."/>
            <person name="Lipovich L."/>
            <person name="Liu J."/>
            <person name="Liuni S."/>
            <person name="McWilliam S."/>
            <person name="Madan Babu M."/>
            <person name="Madera M."/>
            <person name="Marchionni L."/>
            <person name="Matsuda H."/>
            <person name="Matsuzawa S."/>
            <person name="Miki H."/>
            <person name="Mignone F."/>
            <person name="Miyake S."/>
            <person name="Morris K."/>
            <person name="Mottagui-Tabar S."/>
            <person name="Mulder N."/>
            <person name="Nakano N."/>
            <person name="Nakauchi H."/>
            <person name="Ng P."/>
            <person name="Nilsson R."/>
            <person name="Nishiguchi S."/>
            <person name="Nishikawa S."/>
            <person name="Nori F."/>
            <person name="Ohara O."/>
            <person name="Okazaki Y."/>
            <person name="Orlando V."/>
            <person name="Pang K.C."/>
            <person name="Pavan W.J."/>
            <person name="Pavesi G."/>
            <person name="Pesole G."/>
            <person name="Petrovsky N."/>
            <person name="Piazza S."/>
            <person name="Reed J."/>
            <person name="Reid J.F."/>
            <person name="Ring B.Z."/>
            <person name="Ringwald M."/>
            <person name="Rost B."/>
            <person name="Ruan Y."/>
            <person name="Salzberg S.L."/>
            <person name="Sandelin A."/>
            <person name="Schneider C."/>
            <person name="Schoenbach C."/>
            <person name="Sekiguchi K."/>
            <person name="Semple C.A."/>
            <person name="Seno S."/>
            <person name="Sessa L."/>
            <person name="Sheng Y."/>
            <person name="Shibata Y."/>
            <person name="Shimada H."/>
            <person name="Shimada K."/>
            <person name="Silva D."/>
            <person name="Sinclair B."/>
            <person name="Sperling S."/>
            <person name="Stupka E."/>
            <person name="Sugiura K."/>
            <person name="Sultana R."/>
            <person name="Takenaka Y."/>
            <person name="Taki K."/>
            <person name="Tammoja K."/>
            <person name="Tan S.L."/>
            <person name="Tang S."/>
            <person name="Taylor M.S."/>
            <person name="Tegner J."/>
            <person name="Teichmann S.A."/>
            <person name="Ueda H.R."/>
            <person name="van Nimwegen E."/>
            <person name="Verardo R."/>
            <person name="Wei C.L."/>
            <person name="Yagi K."/>
            <person name="Yamanishi H."/>
            <person name="Zabarovsky E."/>
            <person name="Zhu S."/>
            <person name="Zimmer A."/>
            <person name="Hide W."/>
            <person name="Bult C."/>
            <person name="Grimmond S.M."/>
            <person name="Teasdale R.D."/>
            <person name="Liu E.T."/>
            <person name="Brusic V."/>
            <person name="Quackenbush J."/>
            <person name="Wahlestedt C."/>
            <person name="Mattick J.S."/>
            <person name="Hume D.A."/>
            <person name="Kai C."/>
            <person name="Sasaki D."/>
            <person name="Tomaru Y."/>
            <person name="Fukuda S."/>
            <person name="Kanamori-Katayama M."/>
            <person name="Suzuki M."/>
            <person name="Aoki J."/>
            <person name="Arakawa T."/>
            <person name="Iida J."/>
            <person name="Imamura K."/>
            <person name="Itoh M."/>
            <person name="Kato T."/>
            <person name="Kawaji H."/>
            <person name="Kawagashira N."/>
            <person name="Kawashima T."/>
            <person name="Kojima M."/>
            <person name="Kondo S."/>
            <person name="Konno H."/>
            <person name="Nakano K."/>
            <person name="Ninomiya N."/>
            <person name="Nishio T."/>
            <person name="Okada M."/>
            <person name="Plessy C."/>
            <person name="Shibata K."/>
            <person name="Shiraki T."/>
            <person name="Suzuki S."/>
            <person name="Tagami M."/>
            <person name="Waki K."/>
            <person name="Watahiki A."/>
            <person name="Okamura-Oho Y."/>
            <person name="Suzuki H."/>
            <person name="Kawai J."/>
            <person name="Hayashizaki Y."/>
        </authorList>
    </citation>
    <scope>NUCLEOTIDE SEQUENCE [LARGE SCALE MRNA] (ISOFORMS 1; 2 AND 3)</scope>
    <source>
        <strain>C57BL/6J</strain>
        <tissue>Brain cortex</tissue>
        <tissue>Cerebellum</tissue>
        <tissue>Lung</tissue>
        <tissue>Placenta</tissue>
    </source>
</reference>
<reference key="2">
    <citation type="journal article" date="2009" name="PLoS Biol.">
        <title>Lineage-specific biology revealed by a finished genome assembly of the mouse.</title>
        <authorList>
            <person name="Church D.M."/>
            <person name="Goodstadt L."/>
            <person name="Hillier L.W."/>
            <person name="Zody M.C."/>
            <person name="Goldstein S."/>
            <person name="She X."/>
            <person name="Bult C.J."/>
            <person name="Agarwala R."/>
            <person name="Cherry J.L."/>
            <person name="DiCuccio M."/>
            <person name="Hlavina W."/>
            <person name="Kapustin Y."/>
            <person name="Meric P."/>
            <person name="Maglott D."/>
            <person name="Birtle Z."/>
            <person name="Marques A.C."/>
            <person name="Graves T."/>
            <person name="Zhou S."/>
            <person name="Teague B."/>
            <person name="Potamousis K."/>
            <person name="Churas C."/>
            <person name="Place M."/>
            <person name="Herschleb J."/>
            <person name="Runnheim R."/>
            <person name="Forrest D."/>
            <person name="Amos-Landgraf J."/>
            <person name="Schwartz D.C."/>
            <person name="Cheng Z."/>
            <person name="Lindblad-Toh K."/>
            <person name="Eichler E.E."/>
            <person name="Ponting C.P."/>
        </authorList>
    </citation>
    <scope>NUCLEOTIDE SEQUENCE [LARGE SCALE GENOMIC DNA]</scope>
    <source>
        <strain>C57BL/6J</strain>
    </source>
</reference>
<reference key="3">
    <citation type="journal article" date="2004" name="Genome Res.">
        <title>The status, quality, and expansion of the NIH full-length cDNA project: the Mammalian Gene Collection (MGC).</title>
        <authorList>
            <consortium name="The MGC Project Team"/>
        </authorList>
    </citation>
    <scope>NUCLEOTIDE SEQUENCE [LARGE SCALE MRNA] (ISOFORM 1)</scope>
    <scope>NUCLEOTIDE SEQUENCE [LARGE SCALE MRNA] OF 244-1211 (ISOFORM 2)</scope>
    <source>
        <strain>C57BL/6J</strain>
        <strain>FVB/N</strain>
        <tissue>Brain</tissue>
        <tissue>Kidney</tissue>
    </source>
</reference>
<reference key="4">
    <citation type="journal article" date="2009" name="J. Biol. Chem.">
        <title>A DNA polymerase-{alpha}primase cofactor with homology to replication protein A-32 regulates DNA replication in mammalian cells.</title>
        <authorList>
            <person name="Casteel D.E."/>
            <person name="Zhuang S."/>
            <person name="Zeng Y."/>
            <person name="Perrino F.W."/>
            <person name="Boss G.R."/>
            <person name="Goulian M."/>
            <person name="Pilz R.B."/>
        </authorList>
    </citation>
    <scope>PROTEIN SEQUENCE OF 98-108; 110-127; 561-568; 814-832; 962-968; 1090-1106; 1111-1137 AND 1159-1165</scope>
    <scope>SUBCELLULAR LOCATION</scope>
    <scope>DNA-BINDING</scope>
    <scope>INTERACTION WITH STN1</scope>
</reference>
<reference key="5">
    <citation type="journal article" date="2009" name="Mol. Cell">
        <title>RPA-like mammalian Ctc1-Stn1-Ten1 complex binds to single-stranded DNA and protects telomeres independently of the Pot1 pathway.</title>
        <authorList>
            <person name="Miyake Y."/>
            <person name="Nakamura M."/>
            <person name="Nabetani A."/>
            <person name="Shimamura S."/>
            <person name="Tamura M."/>
            <person name="Yonehara S."/>
            <person name="Saito M."/>
            <person name="Ishikawa F."/>
        </authorList>
    </citation>
    <scope>FUNCTION</scope>
    <scope>IDENTIFICATION BY MASS SPECTROMETRY</scope>
    <scope>IDENTIFICATION IN THE CST COMPLEX</scope>
    <scope>SUBCELLULAR LOCATION</scope>
</reference>
<reference key="6">
    <citation type="journal article" date="2010" name="Cell">
        <title>A tissue-specific atlas of mouse protein phosphorylation and expression.</title>
        <authorList>
            <person name="Huttlin E.L."/>
            <person name="Jedrychowski M.P."/>
            <person name="Elias J.E."/>
            <person name="Goswami T."/>
            <person name="Rad R."/>
            <person name="Beausoleil S.A."/>
            <person name="Villen J."/>
            <person name="Haas W."/>
            <person name="Sowa M.E."/>
            <person name="Gygi S.P."/>
        </authorList>
    </citation>
    <scope>IDENTIFICATION BY MASS SPECTROMETRY [LARGE SCALE ANALYSIS]</scope>
    <source>
        <tissue>Spleen</tissue>
        <tissue>Testis</tissue>
    </source>
</reference>
<reference key="7">
    <citation type="journal article" date="2012" name="Cell">
        <title>Telomeric 3' overhangs derive from resection by Exo1 and Apollo and fill-in by POT1b-associated CST.</title>
        <authorList>
            <person name="Wu P."/>
            <person name="Takai H."/>
            <person name="de Lange T."/>
        </authorList>
    </citation>
    <scope>FUNCTION</scope>
</reference>
<feature type="chain" id="PRO_0000287183" description="CST complex subunit CTC1">
    <location>
        <begin position="1"/>
        <end position="1212"/>
    </location>
</feature>
<feature type="splice variant" id="VSP_025354" description="In isoform 3." evidence="6">
    <location>
        <begin position="1"/>
        <end position="246"/>
    </location>
</feature>
<feature type="splice variant" id="VSP_025355" description="In isoform 2." evidence="5 6">
    <location>
        <position position="821"/>
    </location>
</feature>
<feature type="sequence conflict" description="In Ref. 1; BAC30081." evidence="7" ref="1">
    <location>
        <position position="446"/>
    </location>
</feature>
<feature type="sequence conflict" description="In Ref. 1; BAE26750." evidence="7" ref="1">
    <original>K</original>
    <variation>E</variation>
    <location>
        <position position="969"/>
    </location>
</feature>
<feature type="sequence conflict" description="In Ref. 1; BAE26750." evidence="7" ref="1">
    <original>P</original>
    <variation>H</variation>
    <location>
        <position position="1144"/>
    </location>
</feature>
<keyword id="KW-0025">Alternative splicing</keyword>
<keyword id="KW-0158">Chromosome</keyword>
<keyword id="KW-0903">Direct protein sequencing</keyword>
<keyword id="KW-0238">DNA-binding</keyword>
<keyword id="KW-0539">Nucleus</keyword>
<keyword id="KW-1185">Reference proteome</keyword>
<keyword id="KW-0779">Telomere</keyword>
<accession>Q5SUQ9</accession>
<accession>B2RW14</accession>
<accession>Q3UKQ1</accession>
<accession>Q6P9S2</accession>
<accession>Q8BRK2</accession>
<accession>Q91WN0</accession>
<accession>Q9CW32</accession>
<proteinExistence type="evidence at protein level"/>
<sequence length="1212" mass="134028">MAACRAQPPTSEQAWLEAAQTFIQETLCPAGKEVDKELTRSVIACVKETWLSQGENQDLTLPFSYSFVSVQSLKTHQRLPCCSHLSWSQSAYQAWTRGGRPGDGVLPREQLILLGTLVDLLGDSEQECRSGSLYVRDNTGTLDCELIDLDLSWLGHLFLFPSWSYLPSAKRNSLGEGHLELWGTPVPVFPLTVSPGPLIPIPVLYPEKASHLLRYRKKSSIKEINLAGKLVHLSALIITQNKRYFIMTLGELAQAGSQVSIIVQIPAQMVWHRVLRPGRAYVLTKLQVTKTRIHLSCIWTTIPSSTLKPLRPGYVQELELDLEFSKADLKPPPQPTSSKDSRGQEGLVRASKVLHYLGTVTAVLHESAGLYILDGQLILCLAYQKIHGLRRVIRPGVCLELRDVHLLQAVGGATTKPVLALCLHGTVRLQGFSCLKPLTLPSSKVYGASLYEQLVWKCQLGLPLYLWAAKTLEDLIYKLCPHVLRCHQFLKQPSPGKPSLGLQLLAPSWDVLIPPGSPMRHAYSEILEEPHNCPLQKYTPLQTPYSFPTMLALAEEGQHRAWATFDPKAMLPLPEASHLTSCQLNRHLAWSWVCLPSCVFQPAQVLLGVLVASSRKGCLELRDLRGSLPCIPLTESSQPLIDPNLVGCLVRVEKFQLVVEREVRSSFPSWEEMGMARFIQKKQARVYVQFYLADALILPVPRPTFGSEPSQTASSCPEGPHLGQSRLFLLSHKEALMKRNFCLLPGDSSQPAKPTLSFHVSGTWLCGTQRKEGSGWSPPESLAVESKDQKVFLIFLGSSVRWFPFLYPNQVYRLVASGPSQTPVFETEGSAGTSRRPLELADCGSCLTVQEEWTLELGSSQDIPNVLEVPRTLPESSLAQLLGDNSPDSLVSFSAEILSRILCEPPLALRRMKPGNAGAIKTGVKLTVALEMDDCEYPPHLDIYIEDPQLPPQIGLLPGARVHFSQLEKRISRSNIVYCCFRSSTSVQVLSFPPETKASAPLPHIYLAELLQGDRPPFQATTSCHIVYVLSLQILWVCAHCTSICPQGKCSRRDPSCPSQRAVSQANIRLLVEDGTAEATVICRNHLVARALGLSPSEWSSILEHARGPGRVALQFTGLGGQTESASKTHEPLTLLLRTLCTSPFVLRPVKLSFALERRPTDISPREPSRLQQFQCGELPLLTRVNPRLRLVCLSLQEPELPNPPQASAASS</sequence>
<name>CTC1_MOUSE</name>
<evidence type="ECO:0000250" key="1">
    <source>
        <dbReference type="UniProtKB" id="Q2NKJ3"/>
    </source>
</evidence>
<evidence type="ECO:0000269" key="2">
    <source>
    </source>
</evidence>
<evidence type="ECO:0000269" key="3">
    <source>
    </source>
</evidence>
<evidence type="ECO:0000269" key="4">
    <source>
    </source>
</evidence>
<evidence type="ECO:0000303" key="5">
    <source>
    </source>
</evidence>
<evidence type="ECO:0000303" key="6">
    <source>
    </source>
</evidence>
<evidence type="ECO:0000305" key="7"/>
<protein>
    <recommendedName>
        <fullName>CST complex subunit CTC1</fullName>
    </recommendedName>
    <alternativeName>
        <fullName>Alpha-accessory factor of 132 kDa</fullName>
        <shortName>AAF-132</shortName>
        <shortName>AAF132</shortName>
    </alternativeName>
    <alternativeName>
        <fullName>Conserved telomere maintenance component 1</fullName>
    </alternativeName>
</protein>
<gene>
    <name type="primary">Ctc1</name>
</gene>
<organism>
    <name type="scientific">Mus musculus</name>
    <name type="common">Mouse</name>
    <dbReference type="NCBI Taxonomy" id="10090"/>
    <lineage>
        <taxon>Eukaryota</taxon>
        <taxon>Metazoa</taxon>
        <taxon>Chordata</taxon>
        <taxon>Craniata</taxon>
        <taxon>Vertebrata</taxon>
        <taxon>Euteleostomi</taxon>
        <taxon>Mammalia</taxon>
        <taxon>Eutheria</taxon>
        <taxon>Euarchontoglires</taxon>
        <taxon>Glires</taxon>
        <taxon>Rodentia</taxon>
        <taxon>Myomorpha</taxon>
        <taxon>Muroidea</taxon>
        <taxon>Muridae</taxon>
        <taxon>Murinae</taxon>
        <taxon>Mus</taxon>
        <taxon>Mus</taxon>
    </lineage>
</organism>